<sequence length="209" mass="22913">MEQPRKAVVVTGFGPFGEHAVNASWIAVQELEKLGLGDSVDLHVYEIPVEYQTVQRLIPALWEKHSPQLVVHVGVSGMATTVTLEKCGHNKGYKGLDNCRFCPGSQCCVEDGPESIDSIIDMDAVCKRVTTLGLDVSVTISQDAGRYLCDFTYYTSLYRGRGRSAFVHVPPLGKPYNADQLGRALRAIIEEMLGVLEQAEGDISCCHQL</sequence>
<proteinExistence type="evidence at protein level"/>
<feature type="chain" id="PRO_0000334693" description="Pyroglutamyl-peptidase 1">
    <location>
        <begin position="1"/>
        <end position="209"/>
    </location>
</feature>
<feature type="active site" evidence="1">
    <location>
        <position position="85"/>
    </location>
</feature>
<feature type="active site" evidence="1">
    <location>
        <position position="149"/>
    </location>
</feature>
<feature type="active site" evidence="1">
    <location>
        <position position="168"/>
    </location>
</feature>
<gene>
    <name type="primary">Pgpep1</name>
</gene>
<protein>
    <recommendedName>
        <fullName>Pyroglutamyl-peptidase 1</fullName>
        <ecNumber>3.4.19.3</ecNumber>
    </recommendedName>
    <alternativeName>
        <fullName>5-oxoprolyl-peptidase</fullName>
    </alternativeName>
    <alternativeName>
        <fullName>Pyroglutamyl aminopeptidase I</fullName>
        <shortName>PAP-I</shortName>
    </alternativeName>
    <alternativeName>
        <fullName>Pyroglutamyl-peptidase I</fullName>
        <shortName>PGP-I</shortName>
    </alternativeName>
    <alternativeName>
        <fullName>Pyrrolidone-carboxylate peptidase</fullName>
    </alternativeName>
</protein>
<comment type="function">
    <text evidence="4">Removes 5-oxoproline from various penultimate amino acid residues except L-proline.</text>
</comment>
<comment type="catalytic activity">
    <reaction evidence="2 3 4">
        <text>Release of an N-terminal pyroglutamyl group from a polypeptide, the second amino acid generally not being Pro.</text>
        <dbReference type="EC" id="3.4.19.3"/>
    </reaction>
</comment>
<comment type="subunit">
    <text evidence="4">Monomer.</text>
</comment>
<comment type="subcellular location">
    <subcellularLocation>
        <location evidence="4">Cytoplasm</location>
    </subcellularLocation>
</comment>
<comment type="similarity">
    <text evidence="5">Belongs to the peptidase C15 family.</text>
</comment>
<accession>Q76IC5</accession>
<dbReference type="EC" id="3.4.19.3"/>
<dbReference type="EMBL" id="BC098645">
    <property type="protein sequence ID" value="AAH98645.1"/>
    <property type="molecule type" value="mRNA"/>
</dbReference>
<dbReference type="EMBL" id="AB098134">
    <property type="protein sequence ID" value="BAD01533.1"/>
    <property type="molecule type" value="mRNA"/>
</dbReference>
<dbReference type="RefSeq" id="NP_973717.1">
    <property type="nucleotide sequence ID" value="NM_201988.2"/>
</dbReference>
<dbReference type="SMR" id="Q76IC5"/>
<dbReference type="FunCoup" id="Q76IC5">
    <property type="interactions" value="328"/>
</dbReference>
<dbReference type="STRING" id="10116.ENSRNOP00000026597"/>
<dbReference type="MEROPS" id="C15.010"/>
<dbReference type="PhosphoSitePlus" id="Q76IC5"/>
<dbReference type="PaxDb" id="10116-ENSRNOP00000026597"/>
<dbReference type="Ensembl" id="ENSRNOT00000026597.7">
    <property type="protein sequence ID" value="ENSRNOP00000026597.5"/>
    <property type="gene ID" value="ENSRNOG00000019639.7"/>
</dbReference>
<dbReference type="GeneID" id="290648"/>
<dbReference type="KEGG" id="rno:290648"/>
<dbReference type="UCSC" id="RGD:1303133">
    <property type="organism name" value="rat"/>
</dbReference>
<dbReference type="AGR" id="RGD:1303133"/>
<dbReference type="CTD" id="54858"/>
<dbReference type="RGD" id="1303133">
    <property type="gene designation" value="Pgpep1"/>
</dbReference>
<dbReference type="eggNOG" id="KOG4755">
    <property type="taxonomic scope" value="Eukaryota"/>
</dbReference>
<dbReference type="GeneTree" id="ENSGT00390000015368"/>
<dbReference type="HOGENOM" id="CLU_043960_3_1_1"/>
<dbReference type="InParanoid" id="Q76IC5"/>
<dbReference type="OMA" id="KLAYNHK"/>
<dbReference type="OrthoDB" id="407146at2759"/>
<dbReference type="PhylomeDB" id="Q76IC5"/>
<dbReference type="TreeFam" id="TF313278"/>
<dbReference type="BRENDA" id="3.4.19.3">
    <property type="organism ID" value="5301"/>
</dbReference>
<dbReference type="PRO" id="PR:Q76IC5"/>
<dbReference type="Proteomes" id="UP000002494">
    <property type="component" value="Chromosome 16"/>
</dbReference>
<dbReference type="Bgee" id="ENSRNOG00000019639">
    <property type="expression patterns" value="Expressed in adult mammalian kidney and 19 other cell types or tissues"/>
</dbReference>
<dbReference type="GO" id="GO:0005829">
    <property type="term" value="C:cytosol"/>
    <property type="evidence" value="ECO:0007669"/>
    <property type="project" value="InterPro"/>
</dbReference>
<dbReference type="GO" id="GO:0008233">
    <property type="term" value="F:peptidase activity"/>
    <property type="evidence" value="ECO:0000314"/>
    <property type="project" value="RGD"/>
</dbReference>
<dbReference type="GO" id="GO:0016920">
    <property type="term" value="F:pyroglutamyl-peptidase activity"/>
    <property type="evidence" value="ECO:0007669"/>
    <property type="project" value="UniProtKB-EC"/>
</dbReference>
<dbReference type="GO" id="GO:0030163">
    <property type="term" value="P:protein catabolic process"/>
    <property type="evidence" value="ECO:0000314"/>
    <property type="project" value="RGD"/>
</dbReference>
<dbReference type="GO" id="GO:0006508">
    <property type="term" value="P:proteolysis"/>
    <property type="evidence" value="ECO:0007669"/>
    <property type="project" value="UniProtKB-KW"/>
</dbReference>
<dbReference type="CDD" id="cd00501">
    <property type="entry name" value="Peptidase_C15"/>
    <property type="match status" value="1"/>
</dbReference>
<dbReference type="FunFam" id="3.40.630.20:FF:000002">
    <property type="entry name" value="Pyroglutamyl-peptidase 1"/>
    <property type="match status" value="1"/>
</dbReference>
<dbReference type="Gene3D" id="3.40.630.20">
    <property type="entry name" value="Peptidase C15, pyroglutamyl peptidase I-like"/>
    <property type="match status" value="1"/>
</dbReference>
<dbReference type="InterPro" id="IPR000816">
    <property type="entry name" value="Peptidase_C15"/>
</dbReference>
<dbReference type="InterPro" id="IPR016125">
    <property type="entry name" value="Peptidase_C15-like"/>
</dbReference>
<dbReference type="InterPro" id="IPR036440">
    <property type="entry name" value="Peptidase_C15-like_sf"/>
</dbReference>
<dbReference type="InterPro" id="IPR033694">
    <property type="entry name" value="PGPEP1_Cys_AS"/>
</dbReference>
<dbReference type="InterPro" id="IPR033693">
    <property type="entry name" value="PGPEP1_Glu_AS"/>
</dbReference>
<dbReference type="PANTHER" id="PTHR23402">
    <property type="entry name" value="PROTEASE FAMILY C15 PYROGLUTAMYL-PEPTIDASE I-RELATED"/>
    <property type="match status" value="1"/>
</dbReference>
<dbReference type="PANTHER" id="PTHR23402:SF16">
    <property type="entry name" value="PYROGLUTAMYL-PEPTIDASE 1"/>
    <property type="match status" value="1"/>
</dbReference>
<dbReference type="Pfam" id="PF01470">
    <property type="entry name" value="Peptidase_C15"/>
    <property type="match status" value="1"/>
</dbReference>
<dbReference type="PIRSF" id="PIRSF015592">
    <property type="entry name" value="Prld-crbxl_pptds"/>
    <property type="match status" value="1"/>
</dbReference>
<dbReference type="PRINTS" id="PR00706">
    <property type="entry name" value="PYROGLUPTASE"/>
</dbReference>
<dbReference type="SUPFAM" id="SSF53182">
    <property type="entry name" value="Pyrrolidone carboxyl peptidase (pyroglutamate aminopeptidase)"/>
    <property type="match status" value="1"/>
</dbReference>
<dbReference type="PROSITE" id="PS01334">
    <property type="entry name" value="PYRASE_CYS"/>
    <property type="match status" value="1"/>
</dbReference>
<dbReference type="PROSITE" id="PS01333">
    <property type="entry name" value="PYRASE_GLU"/>
    <property type="match status" value="1"/>
</dbReference>
<reference key="1">
    <citation type="journal article" date="2003" name="Biol. Pharm. Bull.">
        <title>Hydrolysis of synthetic substrate, L-pyroglutamyl p-nitroanilide is catalyzed solely by pyroglutamyl aminopeptidase I in rat liver cytosol.</title>
        <authorList>
            <person name="Abe K."/>
            <person name="Watanabe N."/>
            <person name="Kosaka T."/>
            <person name="Yamada M."/>
            <person name="Tokui T."/>
            <person name="Ikeda T."/>
        </authorList>
    </citation>
    <scope>NUCLEOTIDE SEQUENCE [MRNA]</scope>
    <scope>FUNCTION</scope>
    <scope>CATALYTIC ACTIVITY</scope>
    <scope>SUBUNIT</scope>
    <scope>SUBCELLULAR LOCATION</scope>
    <source>
        <strain>Fischer 344/DuCrj</strain>
        <tissue>Liver</tissue>
    </source>
</reference>
<reference key="2">
    <citation type="journal article" date="2004" name="Genome Res.">
        <title>The status, quality, and expansion of the NIH full-length cDNA project: the Mammalian Gene Collection (MGC).</title>
        <authorList>
            <consortium name="The MGC Project Team"/>
        </authorList>
    </citation>
    <scope>NUCLEOTIDE SEQUENCE [LARGE SCALE MRNA]</scope>
    <source>
        <tissue>Kidney</tissue>
    </source>
</reference>
<name>PGPI_RAT</name>
<keyword id="KW-0963">Cytoplasm</keyword>
<keyword id="KW-0378">Hydrolase</keyword>
<keyword id="KW-0645">Protease</keyword>
<keyword id="KW-1185">Reference proteome</keyword>
<keyword id="KW-0788">Thiol protease</keyword>
<organism>
    <name type="scientific">Rattus norvegicus</name>
    <name type="common">Rat</name>
    <dbReference type="NCBI Taxonomy" id="10116"/>
    <lineage>
        <taxon>Eukaryota</taxon>
        <taxon>Metazoa</taxon>
        <taxon>Chordata</taxon>
        <taxon>Craniata</taxon>
        <taxon>Vertebrata</taxon>
        <taxon>Euteleostomi</taxon>
        <taxon>Mammalia</taxon>
        <taxon>Eutheria</taxon>
        <taxon>Euarchontoglires</taxon>
        <taxon>Glires</taxon>
        <taxon>Rodentia</taxon>
        <taxon>Myomorpha</taxon>
        <taxon>Muroidea</taxon>
        <taxon>Muridae</taxon>
        <taxon>Murinae</taxon>
        <taxon>Rattus</taxon>
    </lineage>
</organism>
<evidence type="ECO:0000250" key="1"/>
<evidence type="ECO:0000255" key="2">
    <source>
        <dbReference type="PROSITE-ProRule" id="PRU10076"/>
    </source>
</evidence>
<evidence type="ECO:0000255" key="3">
    <source>
        <dbReference type="PROSITE-ProRule" id="PRU10077"/>
    </source>
</evidence>
<evidence type="ECO:0000269" key="4">
    <source>
    </source>
</evidence>
<evidence type="ECO:0000305" key="5"/>